<proteinExistence type="inferred from homology"/>
<dbReference type="EMBL" id="CP000850">
    <property type="protein sequence ID" value="ABV98216.1"/>
    <property type="molecule type" value="Genomic_DNA"/>
</dbReference>
<dbReference type="SMR" id="A8M2A0"/>
<dbReference type="STRING" id="391037.Sare_2358"/>
<dbReference type="KEGG" id="saq:Sare_2358"/>
<dbReference type="PATRIC" id="fig|391037.6.peg.2391"/>
<dbReference type="eggNOG" id="COG1222">
    <property type="taxonomic scope" value="Bacteria"/>
</dbReference>
<dbReference type="HOGENOM" id="CLU_036054_0_0_11"/>
<dbReference type="OrthoDB" id="9809379at2"/>
<dbReference type="UniPathway" id="UPA00997"/>
<dbReference type="GO" id="GO:0000502">
    <property type="term" value="C:proteasome complex"/>
    <property type="evidence" value="ECO:0007669"/>
    <property type="project" value="UniProtKB-KW"/>
</dbReference>
<dbReference type="GO" id="GO:0005524">
    <property type="term" value="F:ATP binding"/>
    <property type="evidence" value="ECO:0007669"/>
    <property type="project" value="UniProtKB-UniRule"/>
</dbReference>
<dbReference type="GO" id="GO:0016887">
    <property type="term" value="F:ATP hydrolysis activity"/>
    <property type="evidence" value="ECO:0007669"/>
    <property type="project" value="UniProtKB-UniRule"/>
</dbReference>
<dbReference type="GO" id="GO:0019941">
    <property type="term" value="P:modification-dependent protein catabolic process"/>
    <property type="evidence" value="ECO:0007669"/>
    <property type="project" value="InterPro"/>
</dbReference>
<dbReference type="GO" id="GO:0010498">
    <property type="term" value="P:proteasomal protein catabolic process"/>
    <property type="evidence" value="ECO:0007669"/>
    <property type="project" value="InterPro"/>
</dbReference>
<dbReference type="FunFam" id="3.40.50.300:FF:000155">
    <property type="entry name" value="AAA ATPase forming ring-shaped complexes"/>
    <property type="match status" value="1"/>
</dbReference>
<dbReference type="Gene3D" id="1.10.8.60">
    <property type="match status" value="1"/>
</dbReference>
<dbReference type="Gene3D" id="1.20.5.170">
    <property type="match status" value="1"/>
</dbReference>
<dbReference type="Gene3D" id="2.40.50.140">
    <property type="entry name" value="Nucleic acid-binding proteins"/>
    <property type="match status" value="2"/>
</dbReference>
<dbReference type="Gene3D" id="3.40.50.300">
    <property type="entry name" value="P-loop containing nucleotide triphosphate hydrolases"/>
    <property type="match status" value="1"/>
</dbReference>
<dbReference type="HAMAP" id="MF_02112">
    <property type="entry name" value="ARC_ATPase"/>
    <property type="match status" value="1"/>
</dbReference>
<dbReference type="InterPro" id="IPR003593">
    <property type="entry name" value="AAA+_ATPase"/>
</dbReference>
<dbReference type="InterPro" id="IPR050168">
    <property type="entry name" value="AAA_ATPase_domain"/>
</dbReference>
<dbReference type="InterPro" id="IPR003959">
    <property type="entry name" value="ATPase_AAA_core"/>
</dbReference>
<dbReference type="InterPro" id="IPR003960">
    <property type="entry name" value="ATPase_AAA_CS"/>
</dbReference>
<dbReference type="InterPro" id="IPR012340">
    <property type="entry name" value="NA-bd_OB-fold"/>
</dbReference>
<dbReference type="InterPro" id="IPR027417">
    <property type="entry name" value="P-loop_NTPase"/>
</dbReference>
<dbReference type="InterPro" id="IPR032501">
    <property type="entry name" value="Prot_ATP_ID_OB_2nd"/>
</dbReference>
<dbReference type="InterPro" id="IPR041626">
    <property type="entry name" value="Prot_ATP_ID_OB_N"/>
</dbReference>
<dbReference type="InterPro" id="IPR022482">
    <property type="entry name" value="Proteasome_ATPase"/>
</dbReference>
<dbReference type="NCBIfam" id="TIGR03689">
    <property type="entry name" value="pup_AAA"/>
    <property type="match status" value="1"/>
</dbReference>
<dbReference type="PANTHER" id="PTHR23077">
    <property type="entry name" value="AAA-FAMILY ATPASE"/>
    <property type="match status" value="1"/>
</dbReference>
<dbReference type="PANTHER" id="PTHR23077:SF144">
    <property type="entry name" value="PROTEASOME-ASSOCIATED ATPASE"/>
    <property type="match status" value="1"/>
</dbReference>
<dbReference type="Pfam" id="PF00004">
    <property type="entry name" value="AAA"/>
    <property type="match status" value="1"/>
</dbReference>
<dbReference type="Pfam" id="PF16450">
    <property type="entry name" value="Prot_ATP_ID_OB_C"/>
    <property type="match status" value="1"/>
</dbReference>
<dbReference type="Pfam" id="PF17758">
    <property type="entry name" value="Prot_ATP_ID_OB_N"/>
    <property type="match status" value="1"/>
</dbReference>
<dbReference type="SMART" id="SM00382">
    <property type="entry name" value="AAA"/>
    <property type="match status" value="1"/>
</dbReference>
<dbReference type="SUPFAM" id="SSF52540">
    <property type="entry name" value="P-loop containing nucleoside triphosphate hydrolases"/>
    <property type="match status" value="1"/>
</dbReference>
<dbReference type="PROSITE" id="PS00674">
    <property type="entry name" value="AAA"/>
    <property type="match status" value="1"/>
</dbReference>
<comment type="function">
    <text evidence="1">ATPase which is responsible for recognizing, binding, unfolding and translocation of pupylated proteins into the bacterial 20S proteasome core particle. May be essential for opening the gate of the 20S proteasome via an interaction with its C-terminus, thereby allowing substrate entry and access to the site of proteolysis. Thus, the C-termini of the proteasomal ATPase may function like a 'key in a lock' to induce gate opening and therefore regulate proteolysis.</text>
</comment>
<comment type="pathway">
    <text evidence="1">Protein degradation; proteasomal Pup-dependent pathway.</text>
</comment>
<comment type="subunit">
    <text evidence="1">Homohexamer. Assembles into a hexameric ring structure that caps the 20S proteasome core. Strongly interacts with the prokaryotic ubiquitin-like protein Pup through a hydrophobic interface; the interacting region of ARC lies in its N-terminal coiled-coil domain. There is one Pup binding site per ARC hexamer ring. Upon ATP-binding, the C-terminus of ARC interacts with the alpha-rings of the proteasome core, possibly by binding to the intersubunit pockets.</text>
</comment>
<comment type="domain">
    <text evidence="1">Consists of three main regions, an N-terminal coiled-coil domain that binds to protein Pup and functions as a docking station, an interdomain involved in ARC hexamerization, and a C-terminal ATPase domain of the AAA type.</text>
</comment>
<comment type="similarity">
    <text evidence="1">Belongs to the AAA ATPase family.</text>
</comment>
<accession>A8M2A0</accession>
<name>ARC_SALAI</name>
<sequence length="593" mass="65728">MARSDDADSRAARWEKEAHDLSTQVAFLQEELALVRRKLTESPRHVRQLEERLAAAQAQLARLTENNERLVSTLKEARAQIVTLKEEIDRLAQPPSGYGIFLERHDDGTVDVFTGGRKLRVAVSPSLDVAELCRGQEVLLNDALNIVDAFGYERAGEVVMLKEVLAGPDGAPGDRALVVSHSDEERVVHLAETLIGAAIRAGDSLMIEPRSAYAYERIPKSEVEELVLEEVPDVDYTDIGGLHAQIEQIRDAVELPFLHADLFREHQLRPPKGILLYGPPGCGKTLIAKAVANSLAKKIAERRGEEKHTSYFLNIKGPELLNKYVGETERHIRLIFQRAREKAGEGTPVIVFFDEMDSVFRTRGSGVSSDVENTIVPQLLSEIDGVEGLENVIVIGASNREDMIDPAILRPGRLDVKIKIERPDAEAAKDIFSKYILSGLPLHPDDLAEHGGEPQATVAAMIDAVVLRMYSETEENRFLEVTYANGDKDVLYFKDFNSGAMIQNIVDRGKKMAIKEFLTSARKGLRLQHLLDACVDEFRENEDLPNTTNPDDWARISGKKGERIVYIRTLVSGGKGADAGRSIETASNTGQYL</sequence>
<keyword id="KW-0067">ATP-binding</keyword>
<keyword id="KW-0143">Chaperone</keyword>
<keyword id="KW-0175">Coiled coil</keyword>
<keyword id="KW-0547">Nucleotide-binding</keyword>
<keyword id="KW-0647">Proteasome</keyword>
<gene>
    <name evidence="1" type="primary">arc</name>
    <name type="ordered locus">Sare_2358</name>
</gene>
<evidence type="ECO:0000255" key="1">
    <source>
        <dbReference type="HAMAP-Rule" id="MF_02112"/>
    </source>
</evidence>
<evidence type="ECO:0000256" key="2">
    <source>
        <dbReference type="SAM" id="MobiDB-lite"/>
    </source>
</evidence>
<feature type="chain" id="PRO_0000397018" description="Proteasome-associated ATPase">
    <location>
        <begin position="1"/>
        <end position="593"/>
    </location>
</feature>
<feature type="region of interest" description="Disordered" evidence="2">
    <location>
        <begin position="574"/>
        <end position="593"/>
    </location>
</feature>
<feature type="region of interest" description="Docks into pockets in the proteasome alpha-ring" evidence="1">
    <location>
        <begin position="592"/>
        <end position="593"/>
    </location>
</feature>
<feature type="coiled-coil region" evidence="1">
    <location>
        <begin position="5"/>
        <end position="94"/>
    </location>
</feature>
<feature type="compositionally biased region" description="Polar residues" evidence="2">
    <location>
        <begin position="584"/>
        <end position="593"/>
    </location>
</feature>
<feature type="binding site" evidence="1">
    <location>
        <begin position="281"/>
        <end position="286"/>
    </location>
    <ligand>
        <name>ATP</name>
        <dbReference type="ChEBI" id="CHEBI:30616"/>
    </ligand>
</feature>
<reference key="1">
    <citation type="submission" date="2007-10" db="EMBL/GenBank/DDBJ databases">
        <title>Complete sequence of Salinispora arenicola CNS-205.</title>
        <authorList>
            <consortium name="US DOE Joint Genome Institute"/>
            <person name="Copeland A."/>
            <person name="Lucas S."/>
            <person name="Lapidus A."/>
            <person name="Barry K."/>
            <person name="Glavina del Rio T."/>
            <person name="Dalin E."/>
            <person name="Tice H."/>
            <person name="Pitluck S."/>
            <person name="Foster B."/>
            <person name="Schmutz J."/>
            <person name="Larimer F."/>
            <person name="Land M."/>
            <person name="Hauser L."/>
            <person name="Kyrpides N."/>
            <person name="Ivanova N."/>
            <person name="Jensen P.R."/>
            <person name="Moore B.S."/>
            <person name="Penn K."/>
            <person name="Jenkins C."/>
            <person name="Udwary D."/>
            <person name="Xiang L."/>
            <person name="Gontang E."/>
            <person name="Richardson P."/>
        </authorList>
    </citation>
    <scope>NUCLEOTIDE SEQUENCE [LARGE SCALE GENOMIC DNA]</scope>
    <source>
        <strain>CNS-205</strain>
    </source>
</reference>
<protein>
    <recommendedName>
        <fullName evidence="1">Proteasome-associated ATPase</fullName>
    </recommendedName>
    <alternativeName>
        <fullName evidence="1">AAA ATPase forming ring-shaped complexes</fullName>
        <shortName evidence="1">ARC</shortName>
    </alternativeName>
    <alternativeName>
        <fullName evidence="1">Proteasomal ATPase</fullName>
    </alternativeName>
</protein>
<organism>
    <name type="scientific">Salinispora arenicola (strain CNS-205)</name>
    <dbReference type="NCBI Taxonomy" id="391037"/>
    <lineage>
        <taxon>Bacteria</taxon>
        <taxon>Bacillati</taxon>
        <taxon>Actinomycetota</taxon>
        <taxon>Actinomycetes</taxon>
        <taxon>Micromonosporales</taxon>
        <taxon>Micromonosporaceae</taxon>
        <taxon>Salinispora</taxon>
    </lineage>
</organism>